<accession>Q5FUB3</accession>
<proteinExistence type="inferred from homology"/>
<keyword id="KW-0963">Cytoplasm</keyword>
<keyword id="KW-0269">Exonuclease</keyword>
<keyword id="KW-0378">Hydrolase</keyword>
<keyword id="KW-0540">Nuclease</keyword>
<keyword id="KW-1185">Reference proteome</keyword>
<evidence type="ECO:0000255" key="1">
    <source>
        <dbReference type="HAMAP-Rule" id="MF_00337"/>
    </source>
</evidence>
<evidence type="ECO:0000256" key="2">
    <source>
        <dbReference type="SAM" id="MobiDB-lite"/>
    </source>
</evidence>
<comment type="function">
    <text evidence="1">Bidirectionally degrades single-stranded DNA into large acid-insoluble oligonucleotides, which are then degraded further into small acid-soluble oligonucleotides.</text>
</comment>
<comment type="catalytic activity">
    <reaction evidence="1">
        <text>Exonucleolytic cleavage in either 5'- to 3'- or 3'- to 5'-direction to yield nucleoside 5'-phosphates.</text>
        <dbReference type="EC" id="3.1.11.6"/>
    </reaction>
</comment>
<comment type="subunit">
    <text evidence="1">Heterooligomer composed of large and small subunits.</text>
</comment>
<comment type="subcellular location">
    <subcellularLocation>
        <location evidence="1">Cytoplasm</location>
    </subcellularLocation>
</comment>
<comment type="similarity">
    <text evidence="1">Belongs to the XseB family.</text>
</comment>
<sequence>MPEPIDAMSFEDALSELERIVRGLEGGQMKLEDAISAYERGAALRRHCDAKLGEAEMRVRAIVQNDDGTTGTEPLADTGESGR</sequence>
<dbReference type="EC" id="3.1.11.6" evidence="1"/>
<dbReference type="EMBL" id="CP000009">
    <property type="protein sequence ID" value="AAW60033.1"/>
    <property type="molecule type" value="Genomic_DNA"/>
</dbReference>
<dbReference type="RefSeq" id="WP_011251836.1">
    <property type="nucleotide sequence ID" value="NZ_LT900338.1"/>
</dbReference>
<dbReference type="SMR" id="Q5FUB3"/>
<dbReference type="STRING" id="290633.GOX0250"/>
<dbReference type="KEGG" id="gox:GOX0250"/>
<dbReference type="eggNOG" id="COG1722">
    <property type="taxonomic scope" value="Bacteria"/>
</dbReference>
<dbReference type="HOGENOM" id="CLU_145918_0_3_5"/>
<dbReference type="Proteomes" id="UP000006375">
    <property type="component" value="Chromosome"/>
</dbReference>
<dbReference type="GO" id="GO:0005829">
    <property type="term" value="C:cytosol"/>
    <property type="evidence" value="ECO:0007669"/>
    <property type="project" value="TreeGrafter"/>
</dbReference>
<dbReference type="GO" id="GO:0009318">
    <property type="term" value="C:exodeoxyribonuclease VII complex"/>
    <property type="evidence" value="ECO:0007669"/>
    <property type="project" value="InterPro"/>
</dbReference>
<dbReference type="GO" id="GO:0008855">
    <property type="term" value="F:exodeoxyribonuclease VII activity"/>
    <property type="evidence" value="ECO:0007669"/>
    <property type="project" value="UniProtKB-UniRule"/>
</dbReference>
<dbReference type="GO" id="GO:0006308">
    <property type="term" value="P:DNA catabolic process"/>
    <property type="evidence" value="ECO:0007669"/>
    <property type="project" value="UniProtKB-UniRule"/>
</dbReference>
<dbReference type="Gene3D" id="1.10.287.1040">
    <property type="entry name" value="Exonuclease VII, small subunit"/>
    <property type="match status" value="1"/>
</dbReference>
<dbReference type="HAMAP" id="MF_00337">
    <property type="entry name" value="Exonuc_7_S"/>
    <property type="match status" value="1"/>
</dbReference>
<dbReference type="InterPro" id="IPR003761">
    <property type="entry name" value="Exonuc_VII_S"/>
</dbReference>
<dbReference type="InterPro" id="IPR037004">
    <property type="entry name" value="Exonuc_VII_ssu_sf"/>
</dbReference>
<dbReference type="NCBIfam" id="NF002139">
    <property type="entry name" value="PRK00977.1-3"/>
    <property type="match status" value="1"/>
</dbReference>
<dbReference type="NCBIfam" id="TIGR01280">
    <property type="entry name" value="xseB"/>
    <property type="match status" value="1"/>
</dbReference>
<dbReference type="PANTHER" id="PTHR34137">
    <property type="entry name" value="EXODEOXYRIBONUCLEASE 7 SMALL SUBUNIT"/>
    <property type="match status" value="1"/>
</dbReference>
<dbReference type="PANTHER" id="PTHR34137:SF1">
    <property type="entry name" value="EXODEOXYRIBONUCLEASE 7 SMALL SUBUNIT"/>
    <property type="match status" value="1"/>
</dbReference>
<dbReference type="Pfam" id="PF02609">
    <property type="entry name" value="Exonuc_VII_S"/>
    <property type="match status" value="1"/>
</dbReference>
<dbReference type="SUPFAM" id="SSF116842">
    <property type="entry name" value="XseB-like"/>
    <property type="match status" value="1"/>
</dbReference>
<organism>
    <name type="scientific">Gluconobacter oxydans (strain 621H)</name>
    <name type="common">Gluconobacter suboxydans</name>
    <dbReference type="NCBI Taxonomy" id="290633"/>
    <lineage>
        <taxon>Bacteria</taxon>
        <taxon>Pseudomonadati</taxon>
        <taxon>Pseudomonadota</taxon>
        <taxon>Alphaproteobacteria</taxon>
        <taxon>Acetobacterales</taxon>
        <taxon>Acetobacteraceae</taxon>
        <taxon>Gluconobacter</taxon>
    </lineage>
</organism>
<protein>
    <recommendedName>
        <fullName evidence="1">Exodeoxyribonuclease 7 small subunit</fullName>
        <ecNumber evidence="1">3.1.11.6</ecNumber>
    </recommendedName>
    <alternativeName>
        <fullName evidence="1">Exodeoxyribonuclease VII small subunit</fullName>
        <shortName evidence="1">Exonuclease VII small subunit</shortName>
    </alternativeName>
</protein>
<name>EX7S_GLUOX</name>
<gene>
    <name evidence="1" type="primary">xseB</name>
    <name type="ordered locus">GOX0250</name>
</gene>
<feature type="chain" id="PRO_0000206951" description="Exodeoxyribonuclease 7 small subunit">
    <location>
        <begin position="1"/>
        <end position="83"/>
    </location>
</feature>
<feature type="region of interest" description="Disordered" evidence="2">
    <location>
        <begin position="63"/>
        <end position="83"/>
    </location>
</feature>
<reference key="1">
    <citation type="journal article" date="2005" name="Nat. Biotechnol.">
        <title>Complete genome sequence of the acetic acid bacterium Gluconobacter oxydans.</title>
        <authorList>
            <person name="Prust C."/>
            <person name="Hoffmeister M."/>
            <person name="Liesegang H."/>
            <person name="Wiezer A."/>
            <person name="Fricke W.F."/>
            <person name="Ehrenreich A."/>
            <person name="Gottschalk G."/>
            <person name="Deppenmeier U."/>
        </authorList>
    </citation>
    <scope>NUCLEOTIDE SEQUENCE [LARGE SCALE GENOMIC DNA]</scope>
    <source>
        <strain>621H</strain>
    </source>
</reference>